<comment type="function">
    <text evidence="1">Catalyzes the hydrolysis of N-succinyl-L,L-diaminopimelic acid (SDAP), forming succinate and LL-2,6-diaminopimelate (DAP), an intermediate involved in the bacterial biosynthesis of lysine and meso-diaminopimelic acid, an essential component of bacterial cell walls.</text>
</comment>
<comment type="catalytic activity">
    <reaction evidence="1">
        <text>N-succinyl-(2S,6S)-2,6-diaminopimelate + H2O = (2S,6S)-2,6-diaminopimelate + succinate</text>
        <dbReference type="Rhea" id="RHEA:22608"/>
        <dbReference type="ChEBI" id="CHEBI:15377"/>
        <dbReference type="ChEBI" id="CHEBI:30031"/>
        <dbReference type="ChEBI" id="CHEBI:57609"/>
        <dbReference type="ChEBI" id="CHEBI:58087"/>
        <dbReference type="EC" id="3.5.1.18"/>
    </reaction>
</comment>
<comment type="cofactor">
    <cofactor evidence="1">
        <name>Zn(2+)</name>
        <dbReference type="ChEBI" id="CHEBI:29105"/>
    </cofactor>
    <cofactor evidence="1">
        <name>Co(2+)</name>
        <dbReference type="ChEBI" id="CHEBI:48828"/>
    </cofactor>
    <text evidence="1">Binds 2 Zn(2+) or Co(2+) ions per subunit.</text>
</comment>
<comment type="pathway">
    <text evidence="1">Amino-acid biosynthesis; L-lysine biosynthesis via DAP pathway; LL-2,6-diaminopimelate from (S)-tetrahydrodipicolinate (succinylase route): step 3/3.</text>
</comment>
<comment type="subunit">
    <text evidence="1">Homodimer.</text>
</comment>
<comment type="similarity">
    <text evidence="1">Belongs to the peptidase M20A family. DapE subfamily.</text>
</comment>
<name>DAPE_RHIJ3</name>
<evidence type="ECO:0000255" key="1">
    <source>
        <dbReference type="HAMAP-Rule" id="MF_01690"/>
    </source>
</evidence>
<gene>
    <name evidence="1" type="primary">dapE</name>
    <name type="ordered locus">RL0436</name>
</gene>
<feature type="chain" id="PRO_0000375681" description="Succinyl-diaminopimelate desuccinylase">
    <location>
        <begin position="1"/>
        <end position="397"/>
    </location>
</feature>
<feature type="active site" evidence="1">
    <location>
        <position position="75"/>
    </location>
</feature>
<feature type="active site" description="Proton acceptor" evidence="1">
    <location>
        <position position="140"/>
    </location>
</feature>
<feature type="binding site" evidence="1">
    <location>
        <position position="73"/>
    </location>
    <ligand>
        <name>Zn(2+)</name>
        <dbReference type="ChEBI" id="CHEBI:29105"/>
        <label>1</label>
    </ligand>
</feature>
<feature type="binding site" evidence="1">
    <location>
        <position position="106"/>
    </location>
    <ligand>
        <name>Zn(2+)</name>
        <dbReference type="ChEBI" id="CHEBI:29105"/>
        <label>1</label>
    </ligand>
</feature>
<feature type="binding site" evidence="1">
    <location>
        <position position="106"/>
    </location>
    <ligand>
        <name>Zn(2+)</name>
        <dbReference type="ChEBI" id="CHEBI:29105"/>
        <label>2</label>
    </ligand>
</feature>
<feature type="binding site" evidence="1">
    <location>
        <position position="141"/>
    </location>
    <ligand>
        <name>Zn(2+)</name>
        <dbReference type="ChEBI" id="CHEBI:29105"/>
        <label>2</label>
    </ligand>
</feature>
<feature type="binding site" evidence="1">
    <location>
        <position position="169"/>
    </location>
    <ligand>
        <name>Zn(2+)</name>
        <dbReference type="ChEBI" id="CHEBI:29105"/>
        <label>1</label>
    </ligand>
</feature>
<feature type="binding site" evidence="1">
    <location>
        <position position="366"/>
    </location>
    <ligand>
        <name>Zn(2+)</name>
        <dbReference type="ChEBI" id="CHEBI:29105"/>
        <label>2</label>
    </ligand>
</feature>
<keyword id="KW-0028">Amino-acid biosynthesis</keyword>
<keyword id="KW-0170">Cobalt</keyword>
<keyword id="KW-0220">Diaminopimelate biosynthesis</keyword>
<keyword id="KW-0378">Hydrolase</keyword>
<keyword id="KW-0457">Lysine biosynthesis</keyword>
<keyword id="KW-0479">Metal-binding</keyword>
<keyword id="KW-0862">Zinc</keyword>
<dbReference type="EC" id="3.5.1.18" evidence="1"/>
<dbReference type="EMBL" id="AM236080">
    <property type="protein sequence ID" value="CAK05927.1"/>
    <property type="molecule type" value="Genomic_DNA"/>
</dbReference>
<dbReference type="RefSeq" id="WP_011650226.1">
    <property type="nucleotide sequence ID" value="NC_008380.1"/>
</dbReference>
<dbReference type="SMR" id="Q1MM75"/>
<dbReference type="EnsemblBacteria" id="CAK05927">
    <property type="protein sequence ID" value="CAK05927"/>
    <property type="gene ID" value="RL0436"/>
</dbReference>
<dbReference type="KEGG" id="rle:RL0436"/>
<dbReference type="eggNOG" id="COG0624">
    <property type="taxonomic scope" value="Bacteria"/>
</dbReference>
<dbReference type="HOGENOM" id="CLU_021802_4_0_5"/>
<dbReference type="UniPathway" id="UPA00034">
    <property type="reaction ID" value="UER00021"/>
</dbReference>
<dbReference type="Proteomes" id="UP000006575">
    <property type="component" value="Chromosome"/>
</dbReference>
<dbReference type="GO" id="GO:0008777">
    <property type="term" value="F:acetylornithine deacetylase activity"/>
    <property type="evidence" value="ECO:0007669"/>
    <property type="project" value="TreeGrafter"/>
</dbReference>
<dbReference type="GO" id="GO:0050897">
    <property type="term" value="F:cobalt ion binding"/>
    <property type="evidence" value="ECO:0007669"/>
    <property type="project" value="UniProtKB-UniRule"/>
</dbReference>
<dbReference type="GO" id="GO:0009014">
    <property type="term" value="F:succinyl-diaminopimelate desuccinylase activity"/>
    <property type="evidence" value="ECO:0007669"/>
    <property type="project" value="UniProtKB-UniRule"/>
</dbReference>
<dbReference type="GO" id="GO:0008270">
    <property type="term" value="F:zinc ion binding"/>
    <property type="evidence" value="ECO:0007669"/>
    <property type="project" value="UniProtKB-UniRule"/>
</dbReference>
<dbReference type="GO" id="GO:0019877">
    <property type="term" value="P:diaminopimelate biosynthetic process"/>
    <property type="evidence" value="ECO:0007669"/>
    <property type="project" value="UniProtKB-UniRule"/>
</dbReference>
<dbReference type="GO" id="GO:0006526">
    <property type="term" value="P:L-arginine biosynthetic process"/>
    <property type="evidence" value="ECO:0007669"/>
    <property type="project" value="TreeGrafter"/>
</dbReference>
<dbReference type="GO" id="GO:0009089">
    <property type="term" value="P:lysine biosynthetic process via diaminopimelate"/>
    <property type="evidence" value="ECO:0007669"/>
    <property type="project" value="UniProtKB-UniRule"/>
</dbReference>
<dbReference type="CDD" id="cd03891">
    <property type="entry name" value="M20_DapE_proteobac"/>
    <property type="match status" value="1"/>
</dbReference>
<dbReference type="Gene3D" id="3.30.70.360">
    <property type="match status" value="1"/>
</dbReference>
<dbReference type="Gene3D" id="3.40.630.10">
    <property type="entry name" value="Zn peptidases"/>
    <property type="match status" value="2"/>
</dbReference>
<dbReference type="HAMAP" id="MF_01690">
    <property type="entry name" value="DapE"/>
    <property type="match status" value="1"/>
</dbReference>
<dbReference type="InterPro" id="IPR001261">
    <property type="entry name" value="ArgE/DapE_CS"/>
</dbReference>
<dbReference type="InterPro" id="IPR036264">
    <property type="entry name" value="Bact_exopeptidase_dim_dom"/>
</dbReference>
<dbReference type="InterPro" id="IPR005941">
    <property type="entry name" value="DapE_proteobac"/>
</dbReference>
<dbReference type="InterPro" id="IPR002933">
    <property type="entry name" value="Peptidase_M20"/>
</dbReference>
<dbReference type="InterPro" id="IPR011650">
    <property type="entry name" value="Peptidase_M20_dimer"/>
</dbReference>
<dbReference type="InterPro" id="IPR050072">
    <property type="entry name" value="Peptidase_M20A"/>
</dbReference>
<dbReference type="NCBIfam" id="TIGR01246">
    <property type="entry name" value="dapE_proteo"/>
    <property type="match status" value="1"/>
</dbReference>
<dbReference type="NCBIfam" id="NF009557">
    <property type="entry name" value="PRK13009.1"/>
    <property type="match status" value="1"/>
</dbReference>
<dbReference type="PANTHER" id="PTHR43808">
    <property type="entry name" value="ACETYLORNITHINE DEACETYLASE"/>
    <property type="match status" value="1"/>
</dbReference>
<dbReference type="PANTHER" id="PTHR43808:SF31">
    <property type="entry name" value="N-ACETYL-L-CITRULLINE DEACETYLASE"/>
    <property type="match status" value="1"/>
</dbReference>
<dbReference type="Pfam" id="PF07687">
    <property type="entry name" value="M20_dimer"/>
    <property type="match status" value="1"/>
</dbReference>
<dbReference type="Pfam" id="PF01546">
    <property type="entry name" value="Peptidase_M20"/>
    <property type="match status" value="1"/>
</dbReference>
<dbReference type="SUPFAM" id="SSF55031">
    <property type="entry name" value="Bacterial exopeptidase dimerisation domain"/>
    <property type="match status" value="1"/>
</dbReference>
<dbReference type="SUPFAM" id="SSF53187">
    <property type="entry name" value="Zn-dependent exopeptidases"/>
    <property type="match status" value="1"/>
</dbReference>
<dbReference type="PROSITE" id="PS00758">
    <property type="entry name" value="ARGE_DAPE_CPG2_1"/>
    <property type="match status" value="1"/>
</dbReference>
<dbReference type="PROSITE" id="PS00759">
    <property type="entry name" value="ARGE_DAPE_CPG2_2"/>
    <property type="match status" value="1"/>
</dbReference>
<sequence>MTATDPVANLQTLIRCPSVTPAEGGALSALEAMLAPLGFTVDRVKASEEGTPDIENLYARLGTDGPHLMFAGHTDVVPVGDEAAWTHPPFAAEISKGELFGRGAVDMKGGIACFVAAVARHIEKSGQPKGSISFLITGDEEGPAINGTIKLLQWAAERGERWDACLVGEPTNPDRLGDMIKIGRRGSLSGKITVHGVQGHAAYPHLADNPVRGMLQMTHALMDPPFDGGTDDFQPSNLEVTTVDVGNPATNVIPAKASASFNIRFNDSWTVETLRAEILRRLDAAAGNGELRPGRDPVKYDIVWADRPSHVFLTRNNALIASLSSAVESVSGQSPKLSTTGGTSDARFIKDYCPVVEFGLVGQTMHMVDERVAVADLETLTAIYETFIARWFANAGL</sequence>
<accession>Q1MM75</accession>
<organism>
    <name type="scientific">Rhizobium johnstonii (strain DSM 114642 / LMG 32736 / 3841)</name>
    <name type="common">Rhizobium leguminosarum bv. viciae</name>
    <dbReference type="NCBI Taxonomy" id="216596"/>
    <lineage>
        <taxon>Bacteria</taxon>
        <taxon>Pseudomonadati</taxon>
        <taxon>Pseudomonadota</taxon>
        <taxon>Alphaproteobacteria</taxon>
        <taxon>Hyphomicrobiales</taxon>
        <taxon>Rhizobiaceae</taxon>
        <taxon>Rhizobium/Agrobacterium group</taxon>
        <taxon>Rhizobium</taxon>
        <taxon>Rhizobium johnstonii</taxon>
    </lineage>
</organism>
<protein>
    <recommendedName>
        <fullName evidence="1">Succinyl-diaminopimelate desuccinylase</fullName>
        <shortName evidence="1">SDAP desuccinylase</shortName>
        <ecNumber evidence="1">3.5.1.18</ecNumber>
    </recommendedName>
    <alternativeName>
        <fullName evidence="1">N-succinyl-LL-2,6-diaminoheptanedioate amidohydrolase</fullName>
    </alternativeName>
</protein>
<proteinExistence type="inferred from homology"/>
<reference key="1">
    <citation type="journal article" date="2006" name="Genome Biol.">
        <title>The genome of Rhizobium leguminosarum has recognizable core and accessory components.</title>
        <authorList>
            <person name="Young J.P.W."/>
            <person name="Crossman L.C."/>
            <person name="Johnston A.W.B."/>
            <person name="Thomson N.R."/>
            <person name="Ghazoui Z.F."/>
            <person name="Hull K.H."/>
            <person name="Wexler M."/>
            <person name="Curson A.R.J."/>
            <person name="Todd J.D."/>
            <person name="Poole P.S."/>
            <person name="Mauchline T.H."/>
            <person name="East A.K."/>
            <person name="Quail M.A."/>
            <person name="Churcher C."/>
            <person name="Arrowsmith C."/>
            <person name="Cherevach I."/>
            <person name="Chillingworth T."/>
            <person name="Clarke K."/>
            <person name="Cronin A."/>
            <person name="Davis P."/>
            <person name="Fraser A."/>
            <person name="Hance Z."/>
            <person name="Hauser H."/>
            <person name="Jagels K."/>
            <person name="Moule S."/>
            <person name="Mungall K."/>
            <person name="Norbertczak H."/>
            <person name="Rabbinowitsch E."/>
            <person name="Sanders M."/>
            <person name="Simmonds M."/>
            <person name="Whitehead S."/>
            <person name="Parkhill J."/>
        </authorList>
    </citation>
    <scope>NUCLEOTIDE SEQUENCE [LARGE SCALE GENOMIC DNA]</scope>
    <source>
        <strain>DSM 114642 / LMG 32736 / 3841</strain>
    </source>
</reference>